<gene>
    <name evidence="1" type="primary">arc</name>
    <name type="ordered locus">SGR_5856</name>
</gene>
<organism>
    <name type="scientific">Streptomyces griseus subsp. griseus (strain JCM 4626 / CBS 651.72 / NBRC 13350 / KCC S-0626 / ISP 5235)</name>
    <dbReference type="NCBI Taxonomy" id="455632"/>
    <lineage>
        <taxon>Bacteria</taxon>
        <taxon>Bacillati</taxon>
        <taxon>Actinomycetota</taxon>
        <taxon>Actinomycetes</taxon>
        <taxon>Kitasatosporales</taxon>
        <taxon>Streptomycetaceae</taxon>
        <taxon>Streptomyces</taxon>
    </lineage>
</organism>
<reference key="1">
    <citation type="journal article" date="2008" name="J. Bacteriol.">
        <title>Genome sequence of the streptomycin-producing microorganism Streptomyces griseus IFO 13350.</title>
        <authorList>
            <person name="Ohnishi Y."/>
            <person name="Ishikawa J."/>
            <person name="Hara H."/>
            <person name="Suzuki H."/>
            <person name="Ikenoya M."/>
            <person name="Ikeda H."/>
            <person name="Yamashita A."/>
            <person name="Hattori M."/>
            <person name="Horinouchi S."/>
        </authorList>
    </citation>
    <scope>NUCLEOTIDE SEQUENCE [LARGE SCALE GENOMIC DNA]</scope>
    <source>
        <strain>JCM 4626 / CBS 651.72 / NBRC 13350 / KCC S-0626 / ISP 5235</strain>
    </source>
</reference>
<keyword id="KW-0067">ATP-binding</keyword>
<keyword id="KW-0143">Chaperone</keyword>
<keyword id="KW-0175">Coiled coil</keyword>
<keyword id="KW-0547">Nucleotide-binding</keyword>
<keyword id="KW-0647">Proteasome</keyword>
<sequence length="588" mass="65132">MAAHDDDINRGTRPARGSEDPAGQVAYLEQEIAVLRRKLADSPRHTRILEERIVELQTNLAGVSAQNERLANTLREARDQIVALKEEVDRLAQPPAGFGVFLQANEDGTCDIFTGGRKLRVNVSPSVELDDLRRGQEVMLNEALNVVEAMQFERAGDIVTLKEILEDGERALVVGHTDEERVVRLAEPLLDITIRSGDALLLDSRSGYVYEVVPKSEVEELVLEEVPDIDYDKIGGLGDQIELIRDAVELPYLHPDLFKEHELRPPKGILLYGPPGCGKTLIAKAVANSLAKKVAEVTGQPAGKSYFLNIKGPELLNKYVGETERHIRLVFQRAREKASEGTPVIVFFDEMESLFRTRGSGVSSDVENTIVPQLLAEIDGVEGLENVIVIGASNREDMIDPAILRPGRLDVKIKIERPDAEAAKDIFAKYLTPGLPLHADDLSEHTGSREAAAHAMIQSVVERMYTESEENRFLEVTYANGDKEVLYFKDFNSGAMIQNIVDRAKKMAIKAFLEQGQKGLRVAHLLQACVDEFKENEDLPNTTNPDDWARISGKKGERIVFIRTLVTGKQGADTGRSIDTVANTGQYL</sequence>
<accession>B1W303</accession>
<name>ARC_STRGG</name>
<proteinExistence type="inferred from homology"/>
<protein>
    <recommendedName>
        <fullName evidence="1">Proteasome-associated ATPase</fullName>
    </recommendedName>
    <alternativeName>
        <fullName evidence="1">AAA ATPase forming ring-shaped complexes</fullName>
        <shortName evidence="1">ARC</shortName>
    </alternativeName>
    <alternativeName>
        <fullName evidence="1">Proteasomal ATPase</fullName>
    </alternativeName>
</protein>
<evidence type="ECO:0000255" key="1">
    <source>
        <dbReference type="HAMAP-Rule" id="MF_02112"/>
    </source>
</evidence>
<evidence type="ECO:0000256" key="2">
    <source>
        <dbReference type="SAM" id="MobiDB-lite"/>
    </source>
</evidence>
<feature type="chain" id="PRO_0000397024" description="Proteasome-associated ATPase">
    <location>
        <begin position="1"/>
        <end position="588"/>
    </location>
</feature>
<feature type="region of interest" description="Disordered" evidence="2">
    <location>
        <begin position="1"/>
        <end position="22"/>
    </location>
</feature>
<feature type="region of interest" description="Docks into pockets in the proteasome alpha-ring" evidence="1">
    <location>
        <begin position="587"/>
        <end position="588"/>
    </location>
</feature>
<feature type="coiled-coil region" evidence="1">
    <location>
        <begin position="47"/>
        <end position="94"/>
    </location>
</feature>
<feature type="compositionally biased region" description="Basic and acidic residues" evidence="2">
    <location>
        <begin position="1"/>
        <end position="10"/>
    </location>
</feature>
<feature type="binding site" evidence="1">
    <location>
        <begin position="276"/>
        <end position="281"/>
    </location>
    <ligand>
        <name>ATP</name>
        <dbReference type="ChEBI" id="CHEBI:30616"/>
    </ligand>
</feature>
<comment type="function">
    <text evidence="1">ATPase which is responsible for recognizing, binding, unfolding and translocation of pupylated proteins into the bacterial 20S proteasome core particle. May be essential for opening the gate of the 20S proteasome via an interaction with its C-terminus, thereby allowing substrate entry and access to the site of proteolysis. Thus, the C-termini of the proteasomal ATPase may function like a 'key in a lock' to induce gate opening and therefore regulate proteolysis.</text>
</comment>
<comment type="pathway">
    <text evidence="1">Protein degradation; proteasomal Pup-dependent pathway.</text>
</comment>
<comment type="subunit">
    <text evidence="1">Homohexamer. Assembles into a hexameric ring structure that caps the 20S proteasome core. Strongly interacts with the prokaryotic ubiquitin-like protein Pup through a hydrophobic interface; the interacting region of ARC lies in its N-terminal coiled-coil domain. There is one Pup binding site per ARC hexamer ring. Upon ATP-binding, the C-terminus of ARC interacts with the alpha-rings of the proteasome core, possibly by binding to the intersubunit pockets.</text>
</comment>
<comment type="domain">
    <text evidence="1">Consists of three main regions, an N-terminal coiled-coil domain that binds to protein Pup and functions as a docking station, an interdomain involved in ARC hexamerization, and a C-terminal ATPase domain of the AAA type.</text>
</comment>
<comment type="similarity">
    <text evidence="1">Belongs to the AAA ATPase family.</text>
</comment>
<dbReference type="EMBL" id="AP009493">
    <property type="protein sequence ID" value="BAG22685.1"/>
    <property type="molecule type" value="Genomic_DNA"/>
</dbReference>
<dbReference type="RefSeq" id="WP_003970164.1">
    <property type="nucleotide sequence ID" value="NC_010572.1"/>
</dbReference>
<dbReference type="SMR" id="B1W303"/>
<dbReference type="KEGG" id="sgr:SGR_5856"/>
<dbReference type="eggNOG" id="COG1222">
    <property type="taxonomic scope" value="Bacteria"/>
</dbReference>
<dbReference type="HOGENOM" id="CLU_036054_0_0_11"/>
<dbReference type="UniPathway" id="UPA00997"/>
<dbReference type="Proteomes" id="UP000001685">
    <property type="component" value="Chromosome"/>
</dbReference>
<dbReference type="GO" id="GO:0000502">
    <property type="term" value="C:proteasome complex"/>
    <property type="evidence" value="ECO:0007669"/>
    <property type="project" value="UniProtKB-KW"/>
</dbReference>
<dbReference type="GO" id="GO:0005524">
    <property type="term" value="F:ATP binding"/>
    <property type="evidence" value="ECO:0007669"/>
    <property type="project" value="UniProtKB-UniRule"/>
</dbReference>
<dbReference type="GO" id="GO:0016887">
    <property type="term" value="F:ATP hydrolysis activity"/>
    <property type="evidence" value="ECO:0007669"/>
    <property type="project" value="UniProtKB-UniRule"/>
</dbReference>
<dbReference type="GO" id="GO:0019941">
    <property type="term" value="P:modification-dependent protein catabolic process"/>
    <property type="evidence" value="ECO:0007669"/>
    <property type="project" value="InterPro"/>
</dbReference>
<dbReference type="GO" id="GO:0010498">
    <property type="term" value="P:proteasomal protein catabolic process"/>
    <property type="evidence" value="ECO:0007669"/>
    <property type="project" value="InterPro"/>
</dbReference>
<dbReference type="FunFam" id="1.20.5.170:FF:000018">
    <property type="entry name" value="AAA ATPase forming ring-shaped complexes"/>
    <property type="match status" value="1"/>
</dbReference>
<dbReference type="FunFam" id="2.40.50.140:FF:000109">
    <property type="entry name" value="AAA ATPase forming ring-shaped complexes"/>
    <property type="match status" value="1"/>
</dbReference>
<dbReference type="FunFam" id="3.40.50.300:FF:000155">
    <property type="entry name" value="AAA ATPase forming ring-shaped complexes"/>
    <property type="match status" value="1"/>
</dbReference>
<dbReference type="Gene3D" id="1.10.8.60">
    <property type="match status" value="1"/>
</dbReference>
<dbReference type="Gene3D" id="1.20.5.170">
    <property type="match status" value="1"/>
</dbReference>
<dbReference type="Gene3D" id="2.40.50.140">
    <property type="entry name" value="Nucleic acid-binding proteins"/>
    <property type="match status" value="2"/>
</dbReference>
<dbReference type="Gene3D" id="3.40.50.300">
    <property type="entry name" value="P-loop containing nucleotide triphosphate hydrolases"/>
    <property type="match status" value="1"/>
</dbReference>
<dbReference type="HAMAP" id="MF_02112">
    <property type="entry name" value="ARC_ATPase"/>
    <property type="match status" value="1"/>
</dbReference>
<dbReference type="InterPro" id="IPR003593">
    <property type="entry name" value="AAA+_ATPase"/>
</dbReference>
<dbReference type="InterPro" id="IPR050168">
    <property type="entry name" value="AAA_ATPase_domain"/>
</dbReference>
<dbReference type="InterPro" id="IPR003959">
    <property type="entry name" value="ATPase_AAA_core"/>
</dbReference>
<dbReference type="InterPro" id="IPR003960">
    <property type="entry name" value="ATPase_AAA_CS"/>
</dbReference>
<dbReference type="InterPro" id="IPR012340">
    <property type="entry name" value="NA-bd_OB-fold"/>
</dbReference>
<dbReference type="InterPro" id="IPR027417">
    <property type="entry name" value="P-loop_NTPase"/>
</dbReference>
<dbReference type="InterPro" id="IPR032501">
    <property type="entry name" value="Prot_ATP_ID_OB_2nd"/>
</dbReference>
<dbReference type="InterPro" id="IPR041626">
    <property type="entry name" value="Prot_ATP_ID_OB_N"/>
</dbReference>
<dbReference type="InterPro" id="IPR022482">
    <property type="entry name" value="Proteasome_ATPase"/>
</dbReference>
<dbReference type="NCBIfam" id="TIGR03689">
    <property type="entry name" value="pup_AAA"/>
    <property type="match status" value="1"/>
</dbReference>
<dbReference type="PANTHER" id="PTHR23077">
    <property type="entry name" value="AAA-FAMILY ATPASE"/>
    <property type="match status" value="1"/>
</dbReference>
<dbReference type="PANTHER" id="PTHR23077:SF144">
    <property type="entry name" value="PROTEASOME-ASSOCIATED ATPASE"/>
    <property type="match status" value="1"/>
</dbReference>
<dbReference type="Pfam" id="PF00004">
    <property type="entry name" value="AAA"/>
    <property type="match status" value="1"/>
</dbReference>
<dbReference type="Pfam" id="PF16450">
    <property type="entry name" value="Prot_ATP_ID_OB_C"/>
    <property type="match status" value="1"/>
</dbReference>
<dbReference type="Pfam" id="PF17758">
    <property type="entry name" value="Prot_ATP_ID_OB_N"/>
    <property type="match status" value="1"/>
</dbReference>
<dbReference type="SMART" id="SM00382">
    <property type="entry name" value="AAA"/>
    <property type="match status" value="1"/>
</dbReference>
<dbReference type="SUPFAM" id="SSF52540">
    <property type="entry name" value="P-loop containing nucleoside triphosphate hydrolases"/>
    <property type="match status" value="1"/>
</dbReference>
<dbReference type="PROSITE" id="PS00674">
    <property type="entry name" value="AAA"/>
    <property type="match status" value="1"/>
</dbReference>